<dbReference type="EMBL" id="AY323206">
    <property type="protein sequence ID" value="AAQ63880.1"/>
    <property type="molecule type" value="mRNA"/>
</dbReference>
<dbReference type="SMR" id="Q6VWJ6"/>
<dbReference type="ExpressionAtlas" id="Q6VWJ6">
    <property type="expression patterns" value="baseline and differential"/>
</dbReference>
<dbReference type="GO" id="GO:0005634">
    <property type="term" value="C:nucleus"/>
    <property type="evidence" value="ECO:0007669"/>
    <property type="project" value="UniProtKB-SubCell"/>
</dbReference>
<dbReference type="GO" id="GO:0003700">
    <property type="term" value="F:DNA-binding transcription factor activity"/>
    <property type="evidence" value="ECO:0007669"/>
    <property type="project" value="InterPro"/>
</dbReference>
<dbReference type="GO" id="GO:0046872">
    <property type="term" value="F:metal ion binding"/>
    <property type="evidence" value="ECO:0007669"/>
    <property type="project" value="UniProtKB-KW"/>
</dbReference>
<dbReference type="GO" id="GO:0043565">
    <property type="term" value="F:sequence-specific DNA binding"/>
    <property type="evidence" value="ECO:0007669"/>
    <property type="project" value="InterPro"/>
</dbReference>
<dbReference type="FunFam" id="2.20.25.80:FF:000006">
    <property type="entry name" value="WRKY transcription factor"/>
    <property type="match status" value="1"/>
</dbReference>
<dbReference type="FunFam" id="2.20.25.80:FF:000001">
    <property type="entry name" value="WRKY transcription factor 33"/>
    <property type="match status" value="1"/>
</dbReference>
<dbReference type="Gene3D" id="2.20.25.80">
    <property type="entry name" value="WRKY domain"/>
    <property type="match status" value="2"/>
</dbReference>
<dbReference type="InterPro" id="IPR003657">
    <property type="entry name" value="WRKY_dom"/>
</dbReference>
<dbReference type="InterPro" id="IPR036576">
    <property type="entry name" value="WRKY_dom_sf"/>
</dbReference>
<dbReference type="InterPro" id="IPR044810">
    <property type="entry name" value="WRKY_plant"/>
</dbReference>
<dbReference type="PANTHER" id="PTHR31221:SF362">
    <property type="entry name" value="WRKY DOMAIN-CONTAINING PROTEIN"/>
    <property type="match status" value="1"/>
</dbReference>
<dbReference type="PANTHER" id="PTHR31221">
    <property type="entry name" value="WRKY TRANSCRIPTION FACTOR PROTEIN 1-RELATED"/>
    <property type="match status" value="1"/>
</dbReference>
<dbReference type="Pfam" id="PF03106">
    <property type="entry name" value="WRKY"/>
    <property type="match status" value="2"/>
</dbReference>
<dbReference type="SMART" id="SM00774">
    <property type="entry name" value="WRKY"/>
    <property type="match status" value="2"/>
</dbReference>
<dbReference type="SUPFAM" id="SSF118290">
    <property type="entry name" value="WRKY DNA-binding domain"/>
    <property type="match status" value="2"/>
</dbReference>
<dbReference type="PROSITE" id="PS50811">
    <property type="entry name" value="WRKY"/>
    <property type="match status" value="2"/>
</dbReference>
<protein>
    <recommendedName>
        <fullName evidence="9">WRKY transcription factor SUSIBA2</fullName>
    </recommendedName>
    <alternativeName>
        <fullName evidence="7">Sugar signaling in barley 2</fullName>
    </alternativeName>
    <alternativeName>
        <fullName>WRKY transcription factor 46</fullName>
    </alternativeName>
</protein>
<reference key="1">
    <citation type="journal article" date="2003" name="Plant Cell">
        <title>A novel WRKY transcription factor, SUSIBA2, participates in sugar signaling in barley by binding to the sugar-responsive elements of the iso1 promoter.</title>
        <authorList>
            <person name="Sun C."/>
            <person name="Palmqvist S."/>
            <person name="Olsson H."/>
            <person name="Boren M."/>
            <person name="Ahlandsberg S."/>
            <person name="Jansson C."/>
        </authorList>
    </citation>
    <scope>NUCLEOTIDE SEQUENCE [MRNA]</scope>
    <scope>FUNCTION</scope>
    <scope>DEVELOPMENTAL STAGE</scope>
    <scope>INDUCTION BY SUGAR</scope>
    <scope>TISSUE SPECIFICITY</scope>
    <scope>SUBCELLULAR LOCATION</scope>
    <source>
        <strain>cv. Pongo</strain>
    </source>
</reference>
<reference key="2">
    <citation type="journal article" date="2005" name="Plant J.">
        <title>Antisense oligodeoxynucleotide inhibition as a potent strategy in plant biology: identification of SUSIBA2 as a transcriptional activator in plant sugar signalling.</title>
        <authorList>
            <person name="Sun C."/>
            <person name="Hoeglund A.S."/>
            <person name="Olsson H."/>
            <person name="Mangelsen E."/>
            <person name="Jansson C."/>
        </authorList>
    </citation>
    <scope>FUNCTION</scope>
    <source>
        <strain>cv. Pongo</strain>
    </source>
</reference>
<reference key="3">
    <citation type="journal article" date="2015" name="Nature">
        <title>Expression of barley SUSIBA2 transcription factor yields high-starch low-methane rice.</title>
        <authorList>
            <person name="Su J."/>
            <person name="Hu C."/>
            <person name="Yan X."/>
            <person name="Jin Y."/>
            <person name="Chen Z."/>
            <person name="Guan Q."/>
            <person name="Wang Y."/>
            <person name="Zhong D."/>
            <person name="Jansson C."/>
            <person name="Wang F."/>
            <person name="Schnuerer A."/>
            <person name="Sun C."/>
        </authorList>
    </citation>
    <scope>BIOTECHNOLOGY</scope>
</reference>
<sequence>MSPARLPISRESCLTIPAGFSPSALLDSPVLLTNFKVEPSPTTGSLGMAAILHKSAHPDMLPSPRDKSVRNAHEDRGSRDFEFKPHLNSSSQSLAPAMSDLKKHEHSMQNQSMNPSSSSSNMVNENRPPCSRESSLTVNVSAQNQPVGMVGLTDSMPAEVGTSEPQQMNSSDNAMQEPQSENVADKSADDGYNWRKYGQKHVKGSENPRSYYKCTHPNCEVKKLLERAVDGLITEVVYKGRHNHPKPQPNRRLAGGAVPSNQGEERYDGASAADDKSSNALSNLANPVHSPGMVEPVPASVSDDDIDAGGGRPYPGDDATEEEDLESKRRKMESAGIDAALMGKPNREPRVVVQTVSEVDILDDGYRWRKYGQKVVKGNPNPRSYYKCTSTGCPVRKHVERASHDPKSVITTYEGKHNHEVPAARNATHEMSAPPMKNVVHQINSNMPSSIGGMMRACEARNYTNQYSQAAETDTVSLDLGVGISPNHSDATNQMQSSGPDQMQYQMQTMGSMYGNMRHPSSMAAPAVQGNSAARMYGSREEKGNEGFTFRATPMDHSANLCYSSAGNLVMGP</sequence>
<name>WRK46_HORVU</name>
<evidence type="ECO:0000250" key="1">
    <source>
        <dbReference type="UniProtKB" id="Q9SI37"/>
    </source>
</evidence>
<evidence type="ECO:0000255" key="2">
    <source>
        <dbReference type="PROSITE-ProRule" id="PRU00223"/>
    </source>
</evidence>
<evidence type="ECO:0000256" key="3">
    <source>
        <dbReference type="SAM" id="MobiDB-lite"/>
    </source>
</evidence>
<evidence type="ECO:0000269" key="4">
    <source>
    </source>
</evidence>
<evidence type="ECO:0000269" key="5">
    <source>
    </source>
</evidence>
<evidence type="ECO:0000269" key="6">
    <source>
    </source>
</evidence>
<evidence type="ECO:0000303" key="7">
    <source>
    </source>
</evidence>
<evidence type="ECO:0000305" key="8"/>
<evidence type="ECO:0000305" key="9">
    <source>
    </source>
</evidence>
<evidence type="ECO:0000312" key="10">
    <source>
        <dbReference type="EMBL" id="AAQ63880.1"/>
    </source>
</evidence>
<organism evidence="10">
    <name type="scientific">Hordeum vulgare</name>
    <name type="common">Barley</name>
    <dbReference type="NCBI Taxonomy" id="4513"/>
    <lineage>
        <taxon>Eukaryota</taxon>
        <taxon>Viridiplantae</taxon>
        <taxon>Streptophyta</taxon>
        <taxon>Embryophyta</taxon>
        <taxon>Tracheophyta</taxon>
        <taxon>Spermatophyta</taxon>
        <taxon>Magnoliopsida</taxon>
        <taxon>Liliopsida</taxon>
        <taxon>Poales</taxon>
        <taxon>Poaceae</taxon>
        <taxon>BOP clade</taxon>
        <taxon>Pooideae</taxon>
        <taxon>Triticodae</taxon>
        <taxon>Triticeae</taxon>
        <taxon>Hordeinae</taxon>
        <taxon>Hordeum</taxon>
    </lineage>
</organism>
<comment type="function">
    <text evidence="4 5">Transcription factor involved in starch synthesis (PubMed:12953112). Acts as a transcriptional activator in sugar signaling (PubMed:16167901). Interacts specifically with the SURE and W-box elements, but not with the SP8a element (PubMed:12953112).</text>
</comment>
<comment type="subcellular location">
    <subcellularLocation>
        <location evidence="4">Nucleus</location>
    </subcellularLocation>
</comment>
<comment type="tissue specificity">
    <text evidence="4">Expressed in endosperm, but not in leaves.</text>
</comment>
<comment type="developmental stage">
    <text evidence="4">Peak of expression 12 days after pollination.</text>
</comment>
<comment type="induction">
    <text evidence="4">Up-regulated by sugar.</text>
</comment>
<comment type="biotechnology">
    <text evidence="6">Expression of barley SUSIBA2 transcription factor in rice yields plants with increased starch content and reduced methane emission.</text>
</comment>
<comment type="similarity">
    <text evidence="8">Belongs to the WRKY group I family.</text>
</comment>
<gene>
    <name evidence="10" type="primary">WRKY46</name>
</gene>
<keyword id="KW-0238">DNA-binding</keyword>
<keyword id="KW-0479">Metal-binding</keyword>
<keyword id="KW-0539">Nucleus</keyword>
<keyword id="KW-0677">Repeat</keyword>
<keyword id="KW-0804">Transcription</keyword>
<keyword id="KW-0805">Transcription regulation</keyword>
<keyword id="KW-0862">Zinc</keyword>
<feature type="chain" id="PRO_0000434099" description="WRKY transcription factor SUSIBA2">
    <location>
        <begin position="1"/>
        <end position="573"/>
    </location>
</feature>
<feature type="DNA-binding region" description="WRKY 1" evidence="2">
    <location>
        <begin position="183"/>
        <end position="247"/>
    </location>
</feature>
<feature type="DNA-binding region" description="WRKY 2" evidence="2">
    <location>
        <begin position="357"/>
        <end position="422"/>
    </location>
</feature>
<feature type="region of interest" description="Disordered" evidence="3">
    <location>
        <begin position="56"/>
        <end position="133"/>
    </location>
</feature>
<feature type="region of interest" description="Disordered" evidence="3">
    <location>
        <begin position="157"/>
        <end position="192"/>
    </location>
</feature>
<feature type="region of interest" description="Disordered" evidence="3">
    <location>
        <begin position="240"/>
        <end position="332"/>
    </location>
</feature>
<feature type="compositionally biased region" description="Basic and acidic residues" evidence="3">
    <location>
        <begin position="64"/>
        <end position="85"/>
    </location>
</feature>
<feature type="compositionally biased region" description="Low complexity" evidence="3">
    <location>
        <begin position="108"/>
        <end position="122"/>
    </location>
</feature>
<feature type="compositionally biased region" description="Polar residues" evidence="3">
    <location>
        <begin position="163"/>
        <end position="182"/>
    </location>
</feature>
<feature type="compositionally biased region" description="Basic and acidic residues" evidence="3">
    <location>
        <begin position="183"/>
        <end position="192"/>
    </location>
</feature>
<feature type="compositionally biased region" description="Basic and acidic residues" evidence="3">
    <location>
        <begin position="263"/>
        <end position="277"/>
    </location>
</feature>
<feature type="binding site" evidence="1">
    <location>
        <position position="214"/>
    </location>
    <ligand>
        <name>Zn(2+)</name>
        <dbReference type="ChEBI" id="CHEBI:29105"/>
    </ligand>
</feature>
<feature type="binding site" evidence="1">
    <location>
        <position position="219"/>
    </location>
    <ligand>
        <name>Zn(2+)</name>
        <dbReference type="ChEBI" id="CHEBI:29105"/>
    </ligand>
</feature>
<feature type="binding site" evidence="1">
    <location>
        <position position="242"/>
    </location>
    <ligand>
        <name>Zn(2+)</name>
        <dbReference type="ChEBI" id="CHEBI:29105"/>
    </ligand>
</feature>
<feature type="binding site" evidence="1">
    <location>
        <position position="244"/>
    </location>
    <ligand>
        <name>Zn(2+)</name>
        <dbReference type="ChEBI" id="CHEBI:29105"/>
    </ligand>
</feature>
<feature type="binding site" evidence="1">
    <location>
        <position position="388"/>
    </location>
    <ligand>
        <name>Zn(2+)</name>
        <dbReference type="ChEBI" id="CHEBI:29105"/>
    </ligand>
</feature>
<feature type="binding site" evidence="1">
    <location>
        <position position="393"/>
    </location>
    <ligand>
        <name>Zn(2+)</name>
        <dbReference type="ChEBI" id="CHEBI:29105"/>
    </ligand>
</feature>
<feature type="binding site" evidence="1">
    <location>
        <position position="417"/>
    </location>
    <ligand>
        <name>Zn(2+)</name>
        <dbReference type="ChEBI" id="CHEBI:29105"/>
    </ligand>
</feature>
<feature type="binding site" evidence="1">
    <location>
        <position position="419"/>
    </location>
    <ligand>
        <name>Zn(2+)</name>
        <dbReference type="ChEBI" id="CHEBI:29105"/>
    </ligand>
</feature>
<accession>Q6VWJ6</accession>
<proteinExistence type="evidence at protein level"/>